<evidence type="ECO:0000250" key="1"/>
<evidence type="ECO:0000255" key="2">
    <source>
        <dbReference type="HAMAP-Rule" id="MF_00100"/>
    </source>
</evidence>
<evidence type="ECO:0000256" key="3">
    <source>
        <dbReference type="SAM" id="MobiDB-lite"/>
    </source>
</evidence>
<sequence length="836" mass="91631">MLRLMRQKKLSIQRRTKTTVSSTTTGGKSKEVQVEVRKKRTVKTDIAQQEEAKLKAQQEAEAKKIAEQKAIEEKARLEAEKVAAKKEADEKVKAETAKPVKSAVDSKVKSVDPEKEKRKAEEAELRRKAEELARQKAEEQARRAAEEAKRYAEADDSDNESSSEDYSDYNLSSRYALEAEDEEDRRNENRGRGKNKVAKAKKGGRDDENSKNSKNERESNRKNQKDAKFGKGKNGKKGAALQQAFTKPAQVVKSDVVIGETITVAELANKMAVKATEIIKMMMKMGEMVTINQVIDQETAQLVAEELGHKVILRNENELEEAVLGDRDVNAEKVTRAPVVTIMGHVDHGKTSLLDYIRKAKVAAGEAGGITQHIGAYHVEMDDGKMITFLDTPGHAAFTSMRARGAKATDIVVLVVAADDGVMPQTIEAIQHAKAAGAPLVVAVNKIDKPEANLDRVEQELLQHDVISEKFGGDVQFVPVSAKKGTGVDDLLDAILLQSEVLELTAVKDGMASGVVIESYLDKGRGPVATILVQSGTLRKGDIVLCGFEYGRVRAMRDENGKEVDEAGPSIPVELLGLSGVPAAGDEATVVRDEKKAREVALYRQGKFREVKLARQQKAKLENMFSNMSEGDVAELNVIVKADVQGSVEAIVQALNELSTNEVKVKVVGSGVGGITETDATLATASNAIIVGFNVRADATARRVIEAENIDLRYYSIIYELLNEIKAAMSGMLEPEFKQEIIGLAEVRDVFRHPKFGAIAGCMVTEGVVKRNNPIRVLRDNVVIFEGELESLRRFKDDVSEVRNGMECGIGVKNYNDVKVGDQIEVFEVVEVKRSI</sequence>
<accession>A5UBT6</accession>
<name>IF2_HAEIE</name>
<comment type="function">
    <text evidence="2">One of the essential components for the initiation of protein synthesis. Protects formylmethionyl-tRNA from spontaneous hydrolysis and promotes its binding to the 30S ribosomal subunits. Also involved in the hydrolysis of GTP during the formation of the 70S ribosomal complex.</text>
</comment>
<comment type="subcellular location">
    <subcellularLocation>
        <location evidence="2">Cytoplasm</location>
    </subcellularLocation>
</comment>
<comment type="similarity">
    <text evidence="2">Belongs to the TRAFAC class translation factor GTPase superfamily. Classic translation factor GTPase family. IF-2 subfamily.</text>
</comment>
<proteinExistence type="inferred from homology"/>
<keyword id="KW-0963">Cytoplasm</keyword>
<keyword id="KW-0342">GTP-binding</keyword>
<keyword id="KW-0396">Initiation factor</keyword>
<keyword id="KW-0547">Nucleotide-binding</keyword>
<keyword id="KW-0648">Protein biosynthesis</keyword>
<feature type="chain" id="PRO_0000335475" description="Translation initiation factor IF-2">
    <location>
        <begin position="1"/>
        <end position="836"/>
    </location>
</feature>
<feature type="domain" description="tr-type G">
    <location>
        <begin position="335"/>
        <end position="505"/>
    </location>
</feature>
<feature type="region of interest" description="Disordered" evidence="3">
    <location>
        <begin position="1"/>
        <end position="43"/>
    </location>
</feature>
<feature type="region of interest" description="Disordered" evidence="3">
    <location>
        <begin position="83"/>
        <end position="240"/>
    </location>
</feature>
<feature type="region of interest" description="G1" evidence="1">
    <location>
        <begin position="344"/>
        <end position="351"/>
    </location>
</feature>
<feature type="region of interest" description="G2" evidence="1">
    <location>
        <begin position="369"/>
        <end position="373"/>
    </location>
</feature>
<feature type="region of interest" description="G3" evidence="1">
    <location>
        <begin position="391"/>
        <end position="394"/>
    </location>
</feature>
<feature type="region of interest" description="G4" evidence="1">
    <location>
        <begin position="445"/>
        <end position="448"/>
    </location>
</feature>
<feature type="region of interest" description="G5" evidence="1">
    <location>
        <begin position="481"/>
        <end position="483"/>
    </location>
</feature>
<feature type="compositionally biased region" description="Basic residues" evidence="3">
    <location>
        <begin position="1"/>
        <end position="17"/>
    </location>
</feature>
<feature type="compositionally biased region" description="Low complexity" evidence="3">
    <location>
        <begin position="18"/>
        <end position="27"/>
    </location>
</feature>
<feature type="compositionally biased region" description="Basic and acidic residues" evidence="3">
    <location>
        <begin position="83"/>
        <end position="153"/>
    </location>
</feature>
<feature type="compositionally biased region" description="Acidic residues" evidence="3">
    <location>
        <begin position="154"/>
        <end position="167"/>
    </location>
</feature>
<feature type="compositionally biased region" description="Basic residues" evidence="3">
    <location>
        <begin position="192"/>
        <end position="202"/>
    </location>
</feature>
<feature type="compositionally biased region" description="Basic and acidic residues" evidence="3">
    <location>
        <begin position="203"/>
        <end position="229"/>
    </location>
</feature>
<feature type="binding site" evidence="2">
    <location>
        <begin position="344"/>
        <end position="351"/>
    </location>
    <ligand>
        <name>GTP</name>
        <dbReference type="ChEBI" id="CHEBI:37565"/>
    </ligand>
</feature>
<feature type="binding site" evidence="2">
    <location>
        <begin position="391"/>
        <end position="395"/>
    </location>
    <ligand>
        <name>GTP</name>
        <dbReference type="ChEBI" id="CHEBI:37565"/>
    </ligand>
</feature>
<feature type="binding site" evidence="2">
    <location>
        <begin position="445"/>
        <end position="448"/>
    </location>
    <ligand>
        <name>GTP</name>
        <dbReference type="ChEBI" id="CHEBI:37565"/>
    </ligand>
</feature>
<dbReference type="EMBL" id="CP000671">
    <property type="protein sequence ID" value="ABQ98237.1"/>
    <property type="molecule type" value="Genomic_DNA"/>
</dbReference>
<dbReference type="SMR" id="A5UBT6"/>
<dbReference type="KEGG" id="hip:CGSHiEE_04160"/>
<dbReference type="HOGENOM" id="CLU_006301_6_3_6"/>
<dbReference type="GO" id="GO:0005829">
    <property type="term" value="C:cytosol"/>
    <property type="evidence" value="ECO:0007669"/>
    <property type="project" value="TreeGrafter"/>
</dbReference>
<dbReference type="GO" id="GO:0005525">
    <property type="term" value="F:GTP binding"/>
    <property type="evidence" value="ECO:0007669"/>
    <property type="project" value="UniProtKB-KW"/>
</dbReference>
<dbReference type="GO" id="GO:0003924">
    <property type="term" value="F:GTPase activity"/>
    <property type="evidence" value="ECO:0007669"/>
    <property type="project" value="UniProtKB-UniRule"/>
</dbReference>
<dbReference type="GO" id="GO:0097216">
    <property type="term" value="F:guanosine tetraphosphate binding"/>
    <property type="evidence" value="ECO:0007669"/>
    <property type="project" value="UniProtKB-ARBA"/>
</dbReference>
<dbReference type="GO" id="GO:0003743">
    <property type="term" value="F:translation initiation factor activity"/>
    <property type="evidence" value="ECO:0007669"/>
    <property type="project" value="UniProtKB-UniRule"/>
</dbReference>
<dbReference type="CDD" id="cd01887">
    <property type="entry name" value="IF2_eIF5B"/>
    <property type="match status" value="1"/>
</dbReference>
<dbReference type="CDD" id="cd03702">
    <property type="entry name" value="IF2_mtIF2_II"/>
    <property type="match status" value="1"/>
</dbReference>
<dbReference type="CDD" id="cd03692">
    <property type="entry name" value="mtIF2_IVc"/>
    <property type="match status" value="1"/>
</dbReference>
<dbReference type="FunFam" id="2.40.30.10:FF:000007">
    <property type="entry name" value="Translation initiation factor IF-2"/>
    <property type="match status" value="1"/>
</dbReference>
<dbReference type="FunFam" id="2.40.30.10:FF:000008">
    <property type="entry name" value="Translation initiation factor IF-2"/>
    <property type="match status" value="1"/>
</dbReference>
<dbReference type="FunFam" id="3.40.50.10050:FF:000001">
    <property type="entry name" value="Translation initiation factor IF-2"/>
    <property type="match status" value="1"/>
</dbReference>
<dbReference type="FunFam" id="3.40.50.300:FF:000019">
    <property type="entry name" value="Translation initiation factor IF-2"/>
    <property type="match status" value="1"/>
</dbReference>
<dbReference type="Gene3D" id="3.40.50.300">
    <property type="entry name" value="P-loop containing nucleotide triphosphate hydrolases"/>
    <property type="match status" value="1"/>
</dbReference>
<dbReference type="Gene3D" id="2.40.30.10">
    <property type="entry name" value="Translation factors"/>
    <property type="match status" value="2"/>
</dbReference>
<dbReference type="Gene3D" id="3.40.50.10050">
    <property type="entry name" value="Translation initiation factor IF- 2, domain 3"/>
    <property type="match status" value="1"/>
</dbReference>
<dbReference type="HAMAP" id="MF_00100_B">
    <property type="entry name" value="IF_2_B"/>
    <property type="match status" value="1"/>
</dbReference>
<dbReference type="InterPro" id="IPR053905">
    <property type="entry name" value="EF-G-like_DII"/>
</dbReference>
<dbReference type="InterPro" id="IPR004161">
    <property type="entry name" value="EFTu-like_2"/>
</dbReference>
<dbReference type="InterPro" id="IPR013575">
    <property type="entry name" value="IF2_assoc_dom_bac"/>
</dbReference>
<dbReference type="InterPro" id="IPR044145">
    <property type="entry name" value="IF2_II"/>
</dbReference>
<dbReference type="InterPro" id="IPR006847">
    <property type="entry name" value="IF2_N"/>
</dbReference>
<dbReference type="InterPro" id="IPR027417">
    <property type="entry name" value="P-loop_NTPase"/>
</dbReference>
<dbReference type="InterPro" id="IPR005225">
    <property type="entry name" value="Small_GTP-bd"/>
</dbReference>
<dbReference type="InterPro" id="IPR000795">
    <property type="entry name" value="T_Tr_GTP-bd_dom"/>
</dbReference>
<dbReference type="InterPro" id="IPR000178">
    <property type="entry name" value="TF_IF2_bacterial-like"/>
</dbReference>
<dbReference type="InterPro" id="IPR015760">
    <property type="entry name" value="TIF_IF2"/>
</dbReference>
<dbReference type="InterPro" id="IPR023115">
    <property type="entry name" value="TIF_IF2_dom3"/>
</dbReference>
<dbReference type="InterPro" id="IPR036925">
    <property type="entry name" value="TIF_IF2_dom3_sf"/>
</dbReference>
<dbReference type="InterPro" id="IPR009000">
    <property type="entry name" value="Transl_B-barrel_sf"/>
</dbReference>
<dbReference type="NCBIfam" id="TIGR00487">
    <property type="entry name" value="IF-2"/>
    <property type="match status" value="1"/>
</dbReference>
<dbReference type="NCBIfam" id="TIGR00231">
    <property type="entry name" value="small_GTP"/>
    <property type="match status" value="1"/>
</dbReference>
<dbReference type="PANTHER" id="PTHR43381:SF5">
    <property type="entry name" value="TR-TYPE G DOMAIN-CONTAINING PROTEIN"/>
    <property type="match status" value="1"/>
</dbReference>
<dbReference type="PANTHER" id="PTHR43381">
    <property type="entry name" value="TRANSLATION INITIATION FACTOR IF-2-RELATED"/>
    <property type="match status" value="1"/>
</dbReference>
<dbReference type="Pfam" id="PF22042">
    <property type="entry name" value="EF-G_D2"/>
    <property type="match status" value="1"/>
</dbReference>
<dbReference type="Pfam" id="PF00009">
    <property type="entry name" value="GTP_EFTU"/>
    <property type="match status" value="1"/>
</dbReference>
<dbReference type="Pfam" id="PF03144">
    <property type="entry name" value="GTP_EFTU_D2"/>
    <property type="match status" value="1"/>
</dbReference>
<dbReference type="Pfam" id="PF11987">
    <property type="entry name" value="IF-2"/>
    <property type="match status" value="1"/>
</dbReference>
<dbReference type="Pfam" id="PF08364">
    <property type="entry name" value="IF2_assoc"/>
    <property type="match status" value="1"/>
</dbReference>
<dbReference type="Pfam" id="PF04760">
    <property type="entry name" value="IF2_N"/>
    <property type="match status" value="1"/>
</dbReference>
<dbReference type="SUPFAM" id="SSF52156">
    <property type="entry name" value="Initiation factor IF2/eIF5b, domain 3"/>
    <property type="match status" value="1"/>
</dbReference>
<dbReference type="SUPFAM" id="SSF52540">
    <property type="entry name" value="P-loop containing nucleoside triphosphate hydrolases"/>
    <property type="match status" value="1"/>
</dbReference>
<dbReference type="SUPFAM" id="SSF50447">
    <property type="entry name" value="Translation proteins"/>
    <property type="match status" value="2"/>
</dbReference>
<dbReference type="PROSITE" id="PS51722">
    <property type="entry name" value="G_TR_2"/>
    <property type="match status" value="1"/>
</dbReference>
<dbReference type="PROSITE" id="PS01176">
    <property type="entry name" value="IF2"/>
    <property type="match status" value="1"/>
</dbReference>
<protein>
    <recommendedName>
        <fullName evidence="2">Translation initiation factor IF-2</fullName>
    </recommendedName>
</protein>
<reference key="1">
    <citation type="journal article" date="2007" name="Genome Biol.">
        <title>Characterization and modeling of the Haemophilus influenzae core and supragenomes based on the complete genomic sequences of Rd and 12 clinical nontypeable strains.</title>
        <authorList>
            <person name="Hogg J.S."/>
            <person name="Hu F.Z."/>
            <person name="Janto B."/>
            <person name="Boissy R."/>
            <person name="Hayes J."/>
            <person name="Keefe R."/>
            <person name="Post J.C."/>
            <person name="Ehrlich G.D."/>
        </authorList>
    </citation>
    <scope>NUCLEOTIDE SEQUENCE [LARGE SCALE GENOMIC DNA]</scope>
    <source>
        <strain>PittEE</strain>
    </source>
</reference>
<organism>
    <name type="scientific">Haemophilus influenzae (strain PittEE)</name>
    <dbReference type="NCBI Taxonomy" id="374930"/>
    <lineage>
        <taxon>Bacteria</taxon>
        <taxon>Pseudomonadati</taxon>
        <taxon>Pseudomonadota</taxon>
        <taxon>Gammaproteobacteria</taxon>
        <taxon>Pasteurellales</taxon>
        <taxon>Pasteurellaceae</taxon>
        <taxon>Haemophilus</taxon>
    </lineage>
</organism>
<gene>
    <name evidence="2" type="primary">infB</name>
    <name type="ordered locus">CGSHiEE_04160</name>
</gene>